<sequence length="70" mass="7403">MSGKMTGIVKWFNADKGFGFITPDDGSKDVFVHFSAIQNDGYKSLDEGQKVSFTIESGAKGPAAGNVTSL</sequence>
<protein>
    <recommendedName>
        <fullName>Cold shock protein CspA</fullName>
        <shortName>CSP-A</shortName>
    </recommendedName>
    <alternativeName>
        <fullName>7.4 kDa cold shock protein</fullName>
    </alternativeName>
    <alternativeName>
        <fullName>CS7.4</fullName>
    </alternativeName>
</protein>
<comment type="function">
    <text evidence="1">Binds to and stimulates the transcription of the CCAAT-containing, cold-shock-inducible promoters of the H-NS and GyrA proteins. Also binds to the inverted repeat 5'-ATTGG-3' (By similarity).</text>
</comment>
<comment type="subcellular location">
    <subcellularLocation>
        <location evidence="1">Cytoplasm</location>
    </subcellularLocation>
</comment>
<comment type="induction">
    <text evidence="1">In response to low temperature.</text>
</comment>
<accession>P0A9Y4</accession>
<accession>P15277</accession>
<accession>P37410</accession>
<accession>Q54170</accession>
<reference key="1">
    <citation type="journal article" date="2002" name="Nucleic Acids Res.">
        <title>Genome sequence of Shigella flexneri 2a: insights into pathogenicity through comparison with genomes of Escherichia coli K12 and O157.</title>
        <authorList>
            <person name="Jin Q."/>
            <person name="Yuan Z."/>
            <person name="Xu J."/>
            <person name="Wang Y."/>
            <person name="Shen Y."/>
            <person name="Lu W."/>
            <person name="Wang J."/>
            <person name="Liu H."/>
            <person name="Yang J."/>
            <person name="Yang F."/>
            <person name="Zhang X."/>
            <person name="Zhang J."/>
            <person name="Yang G."/>
            <person name="Wu H."/>
            <person name="Qu D."/>
            <person name="Dong J."/>
            <person name="Sun L."/>
            <person name="Xue Y."/>
            <person name="Zhao A."/>
            <person name="Gao Y."/>
            <person name="Zhu J."/>
            <person name="Kan B."/>
            <person name="Ding K."/>
            <person name="Chen S."/>
            <person name="Cheng H."/>
            <person name="Yao Z."/>
            <person name="He B."/>
            <person name="Chen R."/>
            <person name="Ma D."/>
            <person name="Qiang B."/>
            <person name="Wen Y."/>
            <person name="Hou Y."/>
            <person name="Yu J."/>
        </authorList>
    </citation>
    <scope>NUCLEOTIDE SEQUENCE [LARGE SCALE GENOMIC DNA]</scope>
    <source>
        <strain>301 / Serotype 2a</strain>
    </source>
</reference>
<reference key="2">
    <citation type="journal article" date="2003" name="Infect. Immun.">
        <title>Complete genome sequence and comparative genomics of Shigella flexneri serotype 2a strain 2457T.</title>
        <authorList>
            <person name="Wei J."/>
            <person name="Goldberg M.B."/>
            <person name="Burland V."/>
            <person name="Venkatesan M.M."/>
            <person name="Deng W."/>
            <person name="Fournier G."/>
            <person name="Mayhew G.F."/>
            <person name="Plunkett G. III"/>
            <person name="Rose D.J."/>
            <person name="Darling A."/>
            <person name="Mau B."/>
            <person name="Perna N.T."/>
            <person name="Payne S.M."/>
            <person name="Runyen-Janecky L.J."/>
            <person name="Zhou S."/>
            <person name="Schwartz D.C."/>
            <person name="Blattner F.R."/>
        </authorList>
    </citation>
    <scope>NUCLEOTIDE SEQUENCE [LARGE SCALE GENOMIC DNA]</scope>
    <source>
        <strain>ATCC 700930 / 2457T / Serotype 2a</strain>
    </source>
</reference>
<reference key="3">
    <citation type="journal article" date="1997" name="J. Ind. Microbiol. Biotechnol.">
        <title>Detection and speciation of bacteria through PCR using universal major cold-shock protein primer oligomers.</title>
        <authorList>
            <person name="Francis K.P."/>
            <person name="Stewart G.S.A.B."/>
        </authorList>
    </citation>
    <scope>NUCLEOTIDE SEQUENCE [GENOMIC DNA] OF 15-60</scope>
    <source>
        <strain>NCTC 0002</strain>
    </source>
</reference>
<evidence type="ECO:0000250" key="1"/>
<proteinExistence type="inferred from homology"/>
<dbReference type="EMBL" id="AE005674">
    <property type="protein sequence ID" value="AAN45040.1"/>
    <property type="molecule type" value="Genomic_DNA"/>
</dbReference>
<dbReference type="EMBL" id="AE014073">
    <property type="protein sequence ID" value="AAP19147.1"/>
    <property type="molecule type" value="Genomic_DNA"/>
</dbReference>
<dbReference type="EMBL" id="U60037">
    <property type="protein sequence ID" value="AAC80241.1"/>
    <property type="molecule type" value="Genomic_DNA"/>
</dbReference>
<dbReference type="RefSeq" id="NP_709333.1">
    <property type="nucleotide sequence ID" value="NC_004337.2"/>
</dbReference>
<dbReference type="RefSeq" id="WP_000014594.1">
    <property type="nucleotide sequence ID" value="NZ_WPGW01000020.1"/>
</dbReference>
<dbReference type="SMR" id="P0A9Y4"/>
<dbReference type="STRING" id="198214.SF3589"/>
<dbReference type="PaxDb" id="198214-SF3589"/>
<dbReference type="GeneID" id="1026303"/>
<dbReference type="GeneID" id="93778287"/>
<dbReference type="KEGG" id="sfl:SF3589"/>
<dbReference type="KEGG" id="sfx:S4179"/>
<dbReference type="PATRIC" id="fig|198214.7.peg.4236"/>
<dbReference type="HOGENOM" id="CLU_117621_2_1_6"/>
<dbReference type="Proteomes" id="UP000001006">
    <property type="component" value="Chromosome"/>
</dbReference>
<dbReference type="Proteomes" id="UP000002673">
    <property type="component" value="Chromosome"/>
</dbReference>
<dbReference type="GO" id="GO:0005829">
    <property type="term" value="C:cytosol"/>
    <property type="evidence" value="ECO:0007669"/>
    <property type="project" value="UniProtKB-ARBA"/>
</dbReference>
<dbReference type="GO" id="GO:0003677">
    <property type="term" value="F:DNA binding"/>
    <property type="evidence" value="ECO:0007669"/>
    <property type="project" value="UniProtKB-KW"/>
</dbReference>
<dbReference type="CDD" id="cd04458">
    <property type="entry name" value="CSP_CDS"/>
    <property type="match status" value="1"/>
</dbReference>
<dbReference type="FunFam" id="2.40.50.140:FF:000006">
    <property type="entry name" value="Cold shock protein CspC"/>
    <property type="match status" value="1"/>
</dbReference>
<dbReference type="Gene3D" id="2.40.50.140">
    <property type="entry name" value="Nucleic acid-binding proteins"/>
    <property type="match status" value="1"/>
</dbReference>
<dbReference type="InterPro" id="IPR012156">
    <property type="entry name" value="Cold_shock_CspA"/>
</dbReference>
<dbReference type="InterPro" id="IPR050181">
    <property type="entry name" value="Cold_shock_domain"/>
</dbReference>
<dbReference type="InterPro" id="IPR011129">
    <property type="entry name" value="CSD"/>
</dbReference>
<dbReference type="InterPro" id="IPR019844">
    <property type="entry name" value="CSD_CS"/>
</dbReference>
<dbReference type="InterPro" id="IPR002059">
    <property type="entry name" value="CSP_DNA-bd"/>
</dbReference>
<dbReference type="InterPro" id="IPR012340">
    <property type="entry name" value="NA-bd_OB-fold"/>
</dbReference>
<dbReference type="NCBIfam" id="NF007679">
    <property type="entry name" value="PRK10354.1"/>
    <property type="match status" value="1"/>
</dbReference>
<dbReference type="PANTHER" id="PTHR11544">
    <property type="entry name" value="COLD SHOCK DOMAIN CONTAINING PROTEINS"/>
    <property type="match status" value="1"/>
</dbReference>
<dbReference type="Pfam" id="PF00313">
    <property type="entry name" value="CSD"/>
    <property type="match status" value="1"/>
</dbReference>
<dbReference type="PIRSF" id="PIRSF002599">
    <property type="entry name" value="Cold_shock_A"/>
    <property type="match status" value="1"/>
</dbReference>
<dbReference type="PRINTS" id="PR00050">
    <property type="entry name" value="COLDSHOCK"/>
</dbReference>
<dbReference type="SMART" id="SM00357">
    <property type="entry name" value="CSP"/>
    <property type="match status" value="1"/>
</dbReference>
<dbReference type="SUPFAM" id="SSF50249">
    <property type="entry name" value="Nucleic acid-binding proteins"/>
    <property type="match status" value="1"/>
</dbReference>
<dbReference type="PROSITE" id="PS00352">
    <property type="entry name" value="CSD_1"/>
    <property type="match status" value="1"/>
</dbReference>
<dbReference type="PROSITE" id="PS51857">
    <property type="entry name" value="CSD_2"/>
    <property type="match status" value="1"/>
</dbReference>
<gene>
    <name type="primary">cspA</name>
    <name type="ordered locus">SF3589</name>
    <name type="ordered locus">S4179</name>
</gene>
<feature type="initiator methionine" description="Removed" evidence="1">
    <location>
        <position position="1"/>
    </location>
</feature>
<feature type="chain" id="PRO_0000100239" description="Cold shock protein CspA">
    <location>
        <begin position="2"/>
        <end position="70"/>
    </location>
</feature>
<feature type="domain" description="CSD">
    <location>
        <begin position="7"/>
        <end position="67"/>
    </location>
</feature>
<organism>
    <name type="scientific">Shigella flexneri</name>
    <dbReference type="NCBI Taxonomy" id="623"/>
    <lineage>
        <taxon>Bacteria</taxon>
        <taxon>Pseudomonadati</taxon>
        <taxon>Pseudomonadota</taxon>
        <taxon>Gammaproteobacteria</taxon>
        <taxon>Enterobacterales</taxon>
        <taxon>Enterobacteriaceae</taxon>
        <taxon>Shigella</taxon>
    </lineage>
</organism>
<keyword id="KW-0010">Activator</keyword>
<keyword id="KW-0963">Cytoplasm</keyword>
<keyword id="KW-0238">DNA-binding</keyword>
<keyword id="KW-1185">Reference proteome</keyword>
<keyword id="KW-0346">Stress response</keyword>
<keyword id="KW-0804">Transcription</keyword>
<keyword id="KW-0805">Transcription regulation</keyword>
<name>CSPA_SHIFL</name>